<name>RL7_XANCP</name>
<accession>Q8PC57</accession>
<accession>Q8RTJ2</accession>
<proteinExistence type="inferred from homology"/>
<reference key="1">
    <citation type="submission" date="2001-10" db="EMBL/GenBank/DDBJ databases">
        <authorList>
            <person name="Chen S.-J."/>
            <person name="Chiang Y.-L."/>
            <person name="Yu Y.-J."/>
            <person name="Yang M.-T."/>
        </authorList>
    </citation>
    <scope>NUCLEOTIDE SEQUENCE [GENOMIC DNA]</scope>
</reference>
<reference key="2">
    <citation type="journal article" date="2002" name="Nature">
        <title>Comparison of the genomes of two Xanthomonas pathogens with differing host specificities.</title>
        <authorList>
            <person name="da Silva A.C.R."/>
            <person name="Ferro J.A."/>
            <person name="Reinach F.C."/>
            <person name="Farah C.S."/>
            <person name="Furlan L.R."/>
            <person name="Quaggio R.B."/>
            <person name="Monteiro-Vitorello C.B."/>
            <person name="Van Sluys M.A."/>
            <person name="Almeida N.F. Jr."/>
            <person name="Alves L.M.C."/>
            <person name="do Amaral A.M."/>
            <person name="Bertolini M.C."/>
            <person name="Camargo L.E.A."/>
            <person name="Camarotte G."/>
            <person name="Cannavan F."/>
            <person name="Cardozo J."/>
            <person name="Chambergo F."/>
            <person name="Ciapina L.P."/>
            <person name="Cicarelli R.M.B."/>
            <person name="Coutinho L.L."/>
            <person name="Cursino-Santos J.R."/>
            <person name="El-Dorry H."/>
            <person name="Faria J.B."/>
            <person name="Ferreira A.J.S."/>
            <person name="Ferreira R.C.C."/>
            <person name="Ferro M.I.T."/>
            <person name="Formighieri E.F."/>
            <person name="Franco M.C."/>
            <person name="Greggio C.C."/>
            <person name="Gruber A."/>
            <person name="Katsuyama A.M."/>
            <person name="Kishi L.T."/>
            <person name="Leite R.P."/>
            <person name="Lemos E.G.M."/>
            <person name="Lemos M.V.F."/>
            <person name="Locali E.C."/>
            <person name="Machado M.A."/>
            <person name="Madeira A.M.B.N."/>
            <person name="Martinez-Rossi N.M."/>
            <person name="Martins E.C."/>
            <person name="Meidanis J."/>
            <person name="Menck C.F.M."/>
            <person name="Miyaki C.Y."/>
            <person name="Moon D.H."/>
            <person name="Moreira L.M."/>
            <person name="Novo M.T.M."/>
            <person name="Okura V.K."/>
            <person name="Oliveira M.C."/>
            <person name="Oliveira V.R."/>
            <person name="Pereira H.A."/>
            <person name="Rossi A."/>
            <person name="Sena J.A.D."/>
            <person name="Silva C."/>
            <person name="de Souza R.F."/>
            <person name="Spinola L.A.F."/>
            <person name="Takita M.A."/>
            <person name="Tamura R.E."/>
            <person name="Teixeira E.C."/>
            <person name="Tezza R.I.D."/>
            <person name="Trindade dos Santos M."/>
            <person name="Truffi D."/>
            <person name="Tsai S.M."/>
            <person name="White F.F."/>
            <person name="Setubal J.C."/>
            <person name="Kitajima J.P."/>
        </authorList>
    </citation>
    <scope>NUCLEOTIDE SEQUENCE [LARGE SCALE GENOMIC DNA]</scope>
    <source>
        <strain>ATCC 33913 / DSM 3586 / NCPPB 528 / LMG 568 / P 25</strain>
    </source>
</reference>
<organism>
    <name type="scientific">Xanthomonas campestris pv. campestris (strain ATCC 33913 / DSM 3586 / NCPPB 528 / LMG 568 / P 25)</name>
    <dbReference type="NCBI Taxonomy" id="190485"/>
    <lineage>
        <taxon>Bacteria</taxon>
        <taxon>Pseudomonadati</taxon>
        <taxon>Pseudomonadota</taxon>
        <taxon>Gammaproteobacteria</taxon>
        <taxon>Lysobacterales</taxon>
        <taxon>Lysobacteraceae</taxon>
        <taxon>Xanthomonas</taxon>
    </lineage>
</organism>
<protein>
    <recommendedName>
        <fullName evidence="1">Large ribosomal subunit protein bL12</fullName>
    </recommendedName>
    <alternativeName>
        <fullName evidence="2">50S ribosomal protein L7/L12</fullName>
    </alternativeName>
</protein>
<dbReference type="EMBL" id="AF426391">
    <property type="protein sequence ID" value="AAL74159.1"/>
    <property type="molecule type" value="Genomic_DNA"/>
</dbReference>
<dbReference type="EMBL" id="AE008922">
    <property type="protein sequence ID" value="AAM40197.1"/>
    <property type="molecule type" value="Genomic_DNA"/>
</dbReference>
<dbReference type="RefSeq" id="NP_636273.1">
    <property type="nucleotide sequence ID" value="NC_003902.1"/>
</dbReference>
<dbReference type="RefSeq" id="WP_011036117.1">
    <property type="nucleotide sequence ID" value="NC_003902.1"/>
</dbReference>
<dbReference type="SMR" id="Q8PC57"/>
<dbReference type="STRING" id="190485.XCC0887"/>
<dbReference type="EnsemblBacteria" id="AAM40197">
    <property type="protein sequence ID" value="AAM40197"/>
    <property type="gene ID" value="XCC0887"/>
</dbReference>
<dbReference type="KEGG" id="xcc:XCC0887"/>
<dbReference type="PATRIC" id="fig|190485.4.peg.958"/>
<dbReference type="eggNOG" id="COG0222">
    <property type="taxonomic scope" value="Bacteria"/>
</dbReference>
<dbReference type="HOGENOM" id="CLU_086499_3_2_6"/>
<dbReference type="OrthoDB" id="9811748at2"/>
<dbReference type="Proteomes" id="UP000001010">
    <property type="component" value="Chromosome"/>
</dbReference>
<dbReference type="GO" id="GO:0022625">
    <property type="term" value="C:cytosolic large ribosomal subunit"/>
    <property type="evidence" value="ECO:0000318"/>
    <property type="project" value="GO_Central"/>
</dbReference>
<dbReference type="GO" id="GO:0003729">
    <property type="term" value="F:mRNA binding"/>
    <property type="evidence" value="ECO:0000318"/>
    <property type="project" value="GO_Central"/>
</dbReference>
<dbReference type="GO" id="GO:0003735">
    <property type="term" value="F:structural constituent of ribosome"/>
    <property type="evidence" value="ECO:0000318"/>
    <property type="project" value="GO_Central"/>
</dbReference>
<dbReference type="GO" id="GO:0006412">
    <property type="term" value="P:translation"/>
    <property type="evidence" value="ECO:0000318"/>
    <property type="project" value="GO_Central"/>
</dbReference>
<dbReference type="CDD" id="cd00387">
    <property type="entry name" value="Ribosomal_L7_L12"/>
    <property type="match status" value="1"/>
</dbReference>
<dbReference type="FunFam" id="1.20.5.710:FF:000003">
    <property type="entry name" value="50S ribosomal protein L7/L12"/>
    <property type="match status" value="1"/>
</dbReference>
<dbReference type="FunFam" id="3.30.1390.10:FF:000001">
    <property type="entry name" value="50S ribosomal protein L7/L12"/>
    <property type="match status" value="1"/>
</dbReference>
<dbReference type="Gene3D" id="3.30.1390.10">
    <property type="match status" value="1"/>
</dbReference>
<dbReference type="Gene3D" id="1.20.5.710">
    <property type="entry name" value="Single helix bin"/>
    <property type="match status" value="1"/>
</dbReference>
<dbReference type="HAMAP" id="MF_00368">
    <property type="entry name" value="Ribosomal_bL12"/>
    <property type="match status" value="1"/>
</dbReference>
<dbReference type="InterPro" id="IPR000206">
    <property type="entry name" value="Ribosomal_bL12"/>
</dbReference>
<dbReference type="InterPro" id="IPR013823">
    <property type="entry name" value="Ribosomal_bL12_C"/>
</dbReference>
<dbReference type="InterPro" id="IPR014719">
    <property type="entry name" value="Ribosomal_bL12_C/ClpS-like"/>
</dbReference>
<dbReference type="InterPro" id="IPR008932">
    <property type="entry name" value="Ribosomal_bL12_oligo"/>
</dbReference>
<dbReference type="InterPro" id="IPR036235">
    <property type="entry name" value="Ribosomal_bL12_oligo_N_sf"/>
</dbReference>
<dbReference type="NCBIfam" id="TIGR00855">
    <property type="entry name" value="L12"/>
    <property type="match status" value="1"/>
</dbReference>
<dbReference type="PANTHER" id="PTHR45987">
    <property type="entry name" value="39S RIBOSOMAL PROTEIN L12"/>
    <property type="match status" value="1"/>
</dbReference>
<dbReference type="PANTHER" id="PTHR45987:SF4">
    <property type="entry name" value="LARGE RIBOSOMAL SUBUNIT PROTEIN BL12M"/>
    <property type="match status" value="1"/>
</dbReference>
<dbReference type="Pfam" id="PF00542">
    <property type="entry name" value="Ribosomal_L12"/>
    <property type="match status" value="1"/>
</dbReference>
<dbReference type="Pfam" id="PF16320">
    <property type="entry name" value="Ribosomal_L12_N"/>
    <property type="match status" value="1"/>
</dbReference>
<dbReference type="SUPFAM" id="SSF54736">
    <property type="entry name" value="ClpS-like"/>
    <property type="match status" value="1"/>
</dbReference>
<dbReference type="SUPFAM" id="SSF48300">
    <property type="entry name" value="Ribosomal protein L7/12, oligomerisation (N-terminal) domain"/>
    <property type="match status" value="1"/>
</dbReference>
<gene>
    <name evidence="1" type="primary">rplL</name>
    <name type="ordered locus">XCC0887</name>
</gene>
<comment type="function">
    <text evidence="1">Forms part of the ribosomal stalk which helps the ribosome interact with GTP-bound translation factors. Is thus essential for accurate translation.</text>
</comment>
<comment type="subunit">
    <text evidence="1">Homodimer. Part of the ribosomal stalk of the 50S ribosomal subunit. Forms a multimeric L10(L12)X complex, where L10 forms an elongated spine to which 2 to 4 L12 dimers bind in a sequential fashion. Binds GTP-bound translation factors.</text>
</comment>
<comment type="similarity">
    <text evidence="1">Belongs to the bacterial ribosomal protein bL12 family.</text>
</comment>
<keyword id="KW-1185">Reference proteome</keyword>
<keyword id="KW-0687">Ribonucleoprotein</keyword>
<keyword id="KW-0689">Ribosomal protein</keyword>
<evidence type="ECO:0000255" key="1">
    <source>
        <dbReference type="HAMAP-Rule" id="MF_00368"/>
    </source>
</evidence>
<evidence type="ECO:0000305" key="2"/>
<sequence>MSLTNEQIVDAIAEKSLMEVMELVKAIEEKFGVSAAAPVAAAAAGPAAVVEEQTEFTVVLTSPGANKVAAIKAVRGVTGLGLKEAKDLTEAGGILKEGVSKDEAEKIKKEMTEAGATVEVK</sequence>
<feature type="chain" id="PRO_0000157608" description="Large ribosomal subunit protein bL12">
    <location>
        <begin position="1"/>
        <end position="121"/>
    </location>
</feature>
<feature type="sequence conflict" description="In Ref. 1; AAL74159." evidence="2" ref="1">
    <original>V</original>
    <variation>F</variation>
    <location>
        <position position="33"/>
    </location>
</feature>
<feature type="sequence conflict" description="In Ref. 1; AAL74159." evidence="2" ref="1">
    <original>A</original>
    <variation>R</variation>
    <location>
        <position position="44"/>
    </location>
</feature>
<feature type="sequence conflict" description="In Ref. 1; AAL74159." evidence="2" ref="1">
    <original>SK</original>
    <variation>RQ</variation>
    <location>
        <begin position="100"/>
        <end position="101"/>
    </location>
</feature>